<protein>
    <recommendedName>
        <fullName evidence="1">Probable 4-deoxy-4-formamido-L-arabinose-phosphoundecaprenol deformylase ArnD</fullName>
        <ecNumber evidence="1">3.5.1.n3</ecNumber>
    </recommendedName>
</protein>
<name>ARND_YERPE</name>
<accession>Q7CIT9</accession>
<accession>Q74TF6</accession>
<gene>
    <name evidence="1" type="primary">arnD</name>
    <name type="ordered locus">YPO2419</name>
    <name type="ordered locus">y1920</name>
    <name type="ordered locus">YP_2206</name>
</gene>
<organism>
    <name type="scientific">Yersinia pestis</name>
    <dbReference type="NCBI Taxonomy" id="632"/>
    <lineage>
        <taxon>Bacteria</taxon>
        <taxon>Pseudomonadati</taxon>
        <taxon>Pseudomonadota</taxon>
        <taxon>Gammaproteobacteria</taxon>
        <taxon>Enterobacterales</taxon>
        <taxon>Yersiniaceae</taxon>
        <taxon>Yersinia</taxon>
    </lineage>
</organism>
<dbReference type="EC" id="3.5.1.n3" evidence="1"/>
<dbReference type="EMBL" id="AL590842">
    <property type="protein sequence ID" value="CAL21046.1"/>
    <property type="molecule type" value="Genomic_DNA"/>
</dbReference>
<dbReference type="EMBL" id="AE009952">
    <property type="protein sequence ID" value="AAM85487.1"/>
    <property type="molecule type" value="Genomic_DNA"/>
</dbReference>
<dbReference type="EMBL" id="AE017042">
    <property type="protein sequence ID" value="AAS62412.1"/>
    <property type="molecule type" value="Genomic_DNA"/>
</dbReference>
<dbReference type="PIR" id="AC0295">
    <property type="entry name" value="AC0295"/>
</dbReference>
<dbReference type="RefSeq" id="WP_002211822.1">
    <property type="nucleotide sequence ID" value="NZ_WUCL01000026.1"/>
</dbReference>
<dbReference type="RefSeq" id="YP_002347382.1">
    <property type="nucleotide sequence ID" value="NC_003143.1"/>
</dbReference>
<dbReference type="SMR" id="Q7CIT9"/>
<dbReference type="IntAct" id="Q7CIT9">
    <property type="interactions" value="1"/>
</dbReference>
<dbReference type="STRING" id="214092.YPO2419"/>
<dbReference type="PaxDb" id="214092-YPO2419"/>
<dbReference type="DNASU" id="1146867"/>
<dbReference type="EnsemblBacteria" id="AAS62412">
    <property type="protein sequence ID" value="AAS62412"/>
    <property type="gene ID" value="YP_2206"/>
</dbReference>
<dbReference type="GeneID" id="57976258"/>
<dbReference type="KEGG" id="ype:YPO2419"/>
<dbReference type="KEGG" id="ypk:y1920"/>
<dbReference type="KEGG" id="ypm:YP_2206"/>
<dbReference type="PATRIC" id="fig|1028802.3.peg.1779"/>
<dbReference type="eggNOG" id="COG0726">
    <property type="taxonomic scope" value="Bacteria"/>
</dbReference>
<dbReference type="HOGENOM" id="CLU_084199_0_0_6"/>
<dbReference type="OMA" id="HHGWQAN"/>
<dbReference type="OrthoDB" id="5589314at2"/>
<dbReference type="UniPathway" id="UPA00030"/>
<dbReference type="UniPathway" id="UPA00036">
    <property type="reaction ID" value="UER00496"/>
</dbReference>
<dbReference type="Proteomes" id="UP000000815">
    <property type="component" value="Chromosome"/>
</dbReference>
<dbReference type="Proteomes" id="UP000001019">
    <property type="component" value="Chromosome"/>
</dbReference>
<dbReference type="Proteomes" id="UP000002490">
    <property type="component" value="Chromosome"/>
</dbReference>
<dbReference type="GO" id="GO:0016020">
    <property type="term" value="C:membrane"/>
    <property type="evidence" value="ECO:0007669"/>
    <property type="project" value="GOC"/>
</dbReference>
<dbReference type="GO" id="GO:0016811">
    <property type="term" value="F:hydrolase activity, acting on carbon-nitrogen (but not peptide) bonds, in linear amides"/>
    <property type="evidence" value="ECO:0007669"/>
    <property type="project" value="UniProtKB-UniRule"/>
</dbReference>
<dbReference type="GO" id="GO:0036108">
    <property type="term" value="P:4-amino-4-deoxy-alpha-L-arabinopyranosyl undecaprenyl phosphate biosynthetic process"/>
    <property type="evidence" value="ECO:0007669"/>
    <property type="project" value="UniProtKB-UniRule"/>
</dbReference>
<dbReference type="GO" id="GO:0009245">
    <property type="term" value="P:lipid A biosynthetic process"/>
    <property type="evidence" value="ECO:0007669"/>
    <property type="project" value="UniProtKB-UniRule"/>
</dbReference>
<dbReference type="GO" id="GO:0009103">
    <property type="term" value="P:lipopolysaccharide biosynthetic process"/>
    <property type="evidence" value="ECO:0007669"/>
    <property type="project" value="UniProtKB-UniRule"/>
</dbReference>
<dbReference type="GO" id="GO:0046677">
    <property type="term" value="P:response to antibiotic"/>
    <property type="evidence" value="ECO:0007669"/>
    <property type="project" value="UniProtKB-KW"/>
</dbReference>
<dbReference type="CDD" id="cd10939">
    <property type="entry name" value="CE4_ArnD"/>
    <property type="match status" value="1"/>
</dbReference>
<dbReference type="Gene3D" id="3.20.20.370">
    <property type="entry name" value="Glycoside hydrolase/deacetylase"/>
    <property type="match status" value="1"/>
</dbReference>
<dbReference type="HAMAP" id="MF_01870">
    <property type="entry name" value="ArnD"/>
    <property type="match status" value="1"/>
</dbReference>
<dbReference type="InterPro" id="IPR023557">
    <property type="entry name" value="ArnD"/>
</dbReference>
<dbReference type="InterPro" id="IPR011330">
    <property type="entry name" value="Glyco_hydro/deAcase_b/a-brl"/>
</dbReference>
<dbReference type="InterPro" id="IPR002509">
    <property type="entry name" value="NODB_dom"/>
</dbReference>
<dbReference type="InterPro" id="IPR050248">
    <property type="entry name" value="Polysacc_deacetylase_ArnD"/>
</dbReference>
<dbReference type="NCBIfam" id="NF011923">
    <property type="entry name" value="PRK15394.1"/>
    <property type="match status" value="1"/>
</dbReference>
<dbReference type="PANTHER" id="PTHR10587:SF137">
    <property type="entry name" value="4-DEOXY-4-FORMAMIDO-L-ARABINOSE-PHOSPHOUNDECAPRENOL DEFORMYLASE ARND-RELATED"/>
    <property type="match status" value="1"/>
</dbReference>
<dbReference type="PANTHER" id="PTHR10587">
    <property type="entry name" value="GLYCOSYL TRANSFERASE-RELATED"/>
    <property type="match status" value="1"/>
</dbReference>
<dbReference type="Pfam" id="PF01522">
    <property type="entry name" value="Polysacc_deac_1"/>
    <property type="match status" value="1"/>
</dbReference>
<dbReference type="SUPFAM" id="SSF88713">
    <property type="entry name" value="Glycoside hydrolase/deacetylase"/>
    <property type="match status" value="1"/>
</dbReference>
<dbReference type="PROSITE" id="PS51677">
    <property type="entry name" value="NODB"/>
    <property type="match status" value="1"/>
</dbReference>
<feature type="chain" id="PRO_0000383551" description="Probable 4-deoxy-4-formamido-L-arabinose-phosphoundecaprenol deformylase ArnD">
    <location>
        <begin position="1"/>
        <end position="301"/>
    </location>
</feature>
<feature type="domain" description="NodB homology" evidence="1">
    <location>
        <begin position="2"/>
        <end position="261"/>
    </location>
</feature>
<reference key="1">
    <citation type="journal article" date="2001" name="Nature">
        <title>Genome sequence of Yersinia pestis, the causative agent of plague.</title>
        <authorList>
            <person name="Parkhill J."/>
            <person name="Wren B.W."/>
            <person name="Thomson N.R."/>
            <person name="Titball R.W."/>
            <person name="Holden M.T.G."/>
            <person name="Prentice M.B."/>
            <person name="Sebaihia M."/>
            <person name="James K.D."/>
            <person name="Churcher C.M."/>
            <person name="Mungall K.L."/>
            <person name="Baker S."/>
            <person name="Basham D."/>
            <person name="Bentley S.D."/>
            <person name="Brooks K."/>
            <person name="Cerdeno-Tarraga A.-M."/>
            <person name="Chillingworth T."/>
            <person name="Cronin A."/>
            <person name="Davies R.M."/>
            <person name="Davis P."/>
            <person name="Dougan G."/>
            <person name="Feltwell T."/>
            <person name="Hamlin N."/>
            <person name="Holroyd S."/>
            <person name="Jagels K."/>
            <person name="Karlyshev A.V."/>
            <person name="Leather S."/>
            <person name="Moule S."/>
            <person name="Oyston P.C.F."/>
            <person name="Quail M.A."/>
            <person name="Rutherford K.M."/>
            <person name="Simmonds M."/>
            <person name="Skelton J."/>
            <person name="Stevens K."/>
            <person name="Whitehead S."/>
            <person name="Barrell B.G."/>
        </authorList>
    </citation>
    <scope>NUCLEOTIDE SEQUENCE [LARGE SCALE GENOMIC DNA]</scope>
    <source>
        <strain>CO-92 / Biovar Orientalis</strain>
    </source>
</reference>
<reference key="2">
    <citation type="journal article" date="2002" name="J. Bacteriol.">
        <title>Genome sequence of Yersinia pestis KIM.</title>
        <authorList>
            <person name="Deng W."/>
            <person name="Burland V."/>
            <person name="Plunkett G. III"/>
            <person name="Boutin A."/>
            <person name="Mayhew G.F."/>
            <person name="Liss P."/>
            <person name="Perna N.T."/>
            <person name="Rose D.J."/>
            <person name="Mau B."/>
            <person name="Zhou S."/>
            <person name="Schwartz D.C."/>
            <person name="Fetherston J.D."/>
            <person name="Lindler L.E."/>
            <person name="Brubaker R.R."/>
            <person name="Plano G.V."/>
            <person name="Straley S.C."/>
            <person name="McDonough K.A."/>
            <person name="Nilles M.L."/>
            <person name="Matson J.S."/>
            <person name="Blattner F.R."/>
            <person name="Perry R.D."/>
        </authorList>
    </citation>
    <scope>NUCLEOTIDE SEQUENCE [LARGE SCALE GENOMIC DNA]</scope>
    <source>
        <strain>KIM10+ / Biovar Mediaevalis</strain>
    </source>
</reference>
<reference key="3">
    <citation type="journal article" date="2004" name="DNA Res.">
        <title>Complete genome sequence of Yersinia pestis strain 91001, an isolate avirulent to humans.</title>
        <authorList>
            <person name="Song Y."/>
            <person name="Tong Z."/>
            <person name="Wang J."/>
            <person name="Wang L."/>
            <person name="Guo Z."/>
            <person name="Han Y."/>
            <person name="Zhang J."/>
            <person name="Pei D."/>
            <person name="Zhou D."/>
            <person name="Qin H."/>
            <person name="Pang X."/>
            <person name="Han Y."/>
            <person name="Zhai J."/>
            <person name="Li M."/>
            <person name="Cui B."/>
            <person name="Qi Z."/>
            <person name="Jin L."/>
            <person name="Dai R."/>
            <person name="Chen F."/>
            <person name="Li S."/>
            <person name="Ye C."/>
            <person name="Du Z."/>
            <person name="Lin W."/>
            <person name="Wang J."/>
            <person name="Yu J."/>
            <person name="Yang H."/>
            <person name="Wang J."/>
            <person name="Huang P."/>
            <person name="Yang R."/>
        </authorList>
    </citation>
    <scope>NUCLEOTIDE SEQUENCE [LARGE SCALE GENOMIC DNA]</scope>
    <source>
        <strain>91001 / Biovar Mediaevalis</strain>
    </source>
</reference>
<evidence type="ECO:0000255" key="1">
    <source>
        <dbReference type="HAMAP-Rule" id="MF_01870"/>
    </source>
</evidence>
<sequence length="301" mass="33504">MKQVGLRIDVDTYRGTQYGVPSLLTVLEKHDIRASFFFSVGPDNMGRHLWRLFRPRFLWKMLRSNAASLYGWDILLAGTAWPGKKIAKDFGPLMKAAAMAGHEVGLHAWDHQGWQANVASWSQQQLTEQVQRGVDTLQQSIGQPISCSAAAGWRADERVLAVKQQFDFSYNSDCRGTHPFRPLLPNGSLGSVQIPVTLPTYDEVVGGEVQAENFNDFIIDAILRDSGVSVYTIHAEVEGMSQAAMFEQLLMRAKQQDIEFCPLSKLLPSDLQLLPVGKVIRAAFPGREGWLGCQSDIKDAE</sequence>
<proteinExistence type="inferred from homology"/>
<comment type="function">
    <text evidence="1">Catalyzes the deformylation of 4-deoxy-4-formamido-L-arabinose-phosphoundecaprenol to 4-amino-4-deoxy-L-arabinose-phosphoundecaprenol. The modified arabinose is attached to lipid A and is required for resistance to polymyxin and cationic antimicrobial peptides.</text>
</comment>
<comment type="catalytic activity">
    <reaction evidence="1">
        <text>4-deoxy-4-formamido-alpha-L-arabinopyranosyl di-trans,octa-cis-undecaprenyl phosphate + H2O = 4-amino-4-deoxy-alpha-L-arabinopyranosyl di-trans,octa-cis-undecaprenyl phosphate + formate</text>
        <dbReference type="Rhea" id="RHEA:27734"/>
        <dbReference type="ChEBI" id="CHEBI:15377"/>
        <dbReference type="ChEBI" id="CHEBI:15740"/>
        <dbReference type="ChEBI" id="CHEBI:58909"/>
        <dbReference type="ChEBI" id="CHEBI:60463"/>
        <dbReference type="EC" id="3.5.1.n3"/>
    </reaction>
</comment>
<comment type="pathway">
    <text evidence="1">Glycolipid biosynthesis; 4-amino-4-deoxy-alpha-L-arabinose undecaprenyl phosphate biosynthesis; 4-amino-4-deoxy-alpha-L-arabinose undecaprenyl phosphate from UDP-4-deoxy-4-formamido-beta-L-arabinose and undecaprenyl phosphate: step 2/2.</text>
</comment>
<comment type="pathway">
    <text evidence="1">Bacterial outer membrane biogenesis; lipopolysaccharide biosynthesis.</text>
</comment>
<comment type="similarity">
    <text evidence="1">Belongs to the polysaccharide deacetylase family. ArnD deformylase subfamily.</text>
</comment>
<keyword id="KW-0046">Antibiotic resistance</keyword>
<keyword id="KW-0378">Hydrolase</keyword>
<keyword id="KW-0441">Lipid A biosynthesis</keyword>
<keyword id="KW-0444">Lipid biosynthesis</keyword>
<keyword id="KW-0443">Lipid metabolism</keyword>
<keyword id="KW-0448">Lipopolysaccharide biosynthesis</keyword>
<keyword id="KW-1185">Reference proteome</keyword>